<reference key="1">
    <citation type="submission" date="2007-05" db="EMBL/GenBank/DDBJ databases">
        <title>Complete sequence of Thermotoga petrophila RKU-1.</title>
        <authorList>
            <consortium name="US DOE Joint Genome Institute"/>
            <person name="Copeland A."/>
            <person name="Lucas S."/>
            <person name="Lapidus A."/>
            <person name="Barry K."/>
            <person name="Glavina del Rio T."/>
            <person name="Dalin E."/>
            <person name="Tice H."/>
            <person name="Pitluck S."/>
            <person name="Sims D."/>
            <person name="Brettin T."/>
            <person name="Bruce D."/>
            <person name="Detter J.C."/>
            <person name="Han C."/>
            <person name="Tapia R."/>
            <person name="Schmutz J."/>
            <person name="Larimer F."/>
            <person name="Land M."/>
            <person name="Hauser L."/>
            <person name="Kyrpides N."/>
            <person name="Mikhailova N."/>
            <person name="Nelson K."/>
            <person name="Gogarten J.P."/>
            <person name="Noll K."/>
            <person name="Richardson P."/>
        </authorList>
    </citation>
    <scope>NUCLEOTIDE SEQUENCE [LARGE SCALE GENOMIC DNA]</scope>
    <source>
        <strain>ATCC BAA-488 / DSM 13995 / JCM 10881 / RKU-1</strain>
    </source>
</reference>
<gene>
    <name evidence="1" type="primary">minC</name>
    <name type="ordered locus">Tpet_1704</name>
</gene>
<protein>
    <recommendedName>
        <fullName evidence="1">Probable septum site-determining protein MinC</fullName>
    </recommendedName>
</protein>
<organism>
    <name type="scientific">Thermotoga petrophila (strain ATCC BAA-488 / DSM 13995 / JCM 10881 / RKU-1)</name>
    <dbReference type="NCBI Taxonomy" id="390874"/>
    <lineage>
        <taxon>Bacteria</taxon>
        <taxon>Thermotogati</taxon>
        <taxon>Thermotogota</taxon>
        <taxon>Thermotogae</taxon>
        <taxon>Thermotogales</taxon>
        <taxon>Thermotogaceae</taxon>
        <taxon>Thermotoga</taxon>
    </lineage>
</organism>
<keyword id="KW-0131">Cell cycle</keyword>
<keyword id="KW-0132">Cell division</keyword>
<keyword id="KW-0717">Septation</keyword>
<accession>A5IND6</accession>
<comment type="function">
    <text evidence="1">Cell division inhibitor that blocks the formation of polar Z ring septums. Rapidly oscillates between the poles of the cell to destabilize FtsZ filaments that have formed before they mature into polar Z rings. Prevents FtsZ polymerization.</text>
</comment>
<comment type="subunit">
    <text evidence="1">Interacts with MinD and FtsZ.</text>
</comment>
<comment type="similarity">
    <text evidence="1">Belongs to the MinC family.</text>
</comment>
<evidence type="ECO:0000255" key="1">
    <source>
        <dbReference type="HAMAP-Rule" id="MF_00267"/>
    </source>
</evidence>
<feature type="chain" id="PRO_1000047871" description="Probable septum site-determining protein MinC">
    <location>
        <begin position="1"/>
        <end position="210"/>
    </location>
</feature>
<proteinExistence type="inferred from homology"/>
<sequence>MVDFKMTKEGLVLLIRDYQNLEEVLNAISARITQMGGFFAKGDRISLMIENHNKHSQDIPKIVSHLRNLGLEVSQILVGSTVGGKENDLKVESRTTVESTGKVIKRNIRSGQTVVHSGDVIVFGNVNKGAEILAGGSVVVFGKAQGNIRAGLNEGEQAVVAALDLQTSLIQIAGFITHSKGEENVPSIAHVKGNRIVIEPFDKVSFERSE</sequence>
<dbReference type="EMBL" id="CP000702">
    <property type="protein sequence ID" value="ABQ47709.1"/>
    <property type="molecule type" value="Genomic_DNA"/>
</dbReference>
<dbReference type="RefSeq" id="WP_011944115.1">
    <property type="nucleotide sequence ID" value="NC_009486.1"/>
</dbReference>
<dbReference type="SMR" id="A5IND6"/>
<dbReference type="STRING" id="390874.Tpet_1704"/>
<dbReference type="KEGG" id="tpt:Tpet_1704"/>
<dbReference type="eggNOG" id="COG0850">
    <property type="taxonomic scope" value="Bacteria"/>
</dbReference>
<dbReference type="HOGENOM" id="CLU_048711_2_1_0"/>
<dbReference type="Proteomes" id="UP000006558">
    <property type="component" value="Chromosome"/>
</dbReference>
<dbReference type="GO" id="GO:0000902">
    <property type="term" value="P:cell morphogenesis"/>
    <property type="evidence" value="ECO:0007669"/>
    <property type="project" value="InterPro"/>
</dbReference>
<dbReference type="GO" id="GO:0000917">
    <property type="term" value="P:division septum assembly"/>
    <property type="evidence" value="ECO:0007669"/>
    <property type="project" value="UniProtKB-KW"/>
</dbReference>
<dbReference type="GO" id="GO:0051302">
    <property type="term" value="P:regulation of cell division"/>
    <property type="evidence" value="ECO:0007669"/>
    <property type="project" value="InterPro"/>
</dbReference>
<dbReference type="GO" id="GO:1901891">
    <property type="term" value="P:regulation of cell septum assembly"/>
    <property type="evidence" value="ECO:0007669"/>
    <property type="project" value="InterPro"/>
</dbReference>
<dbReference type="Gene3D" id="2.160.20.70">
    <property type="match status" value="1"/>
</dbReference>
<dbReference type="Gene3D" id="3.30.750.50">
    <property type="entry name" value="Cell-division inhibitor MinC, N-terminal domain"/>
    <property type="match status" value="1"/>
</dbReference>
<dbReference type="HAMAP" id="MF_00267">
    <property type="entry name" value="MinC"/>
    <property type="match status" value="1"/>
</dbReference>
<dbReference type="InterPro" id="IPR016098">
    <property type="entry name" value="CAP/MinC_C"/>
</dbReference>
<dbReference type="InterPro" id="IPR013033">
    <property type="entry name" value="MinC"/>
</dbReference>
<dbReference type="InterPro" id="IPR036145">
    <property type="entry name" value="MinC_C_sf"/>
</dbReference>
<dbReference type="InterPro" id="IPR007874">
    <property type="entry name" value="MinC_N"/>
</dbReference>
<dbReference type="InterPro" id="IPR005526">
    <property type="entry name" value="Septum_form_inhib_MinC_C"/>
</dbReference>
<dbReference type="NCBIfam" id="TIGR01222">
    <property type="entry name" value="minC"/>
    <property type="match status" value="1"/>
</dbReference>
<dbReference type="NCBIfam" id="NF010598">
    <property type="entry name" value="PRK13992.1"/>
    <property type="match status" value="1"/>
</dbReference>
<dbReference type="PANTHER" id="PTHR34108">
    <property type="entry name" value="SEPTUM SITE-DETERMINING PROTEIN MINC"/>
    <property type="match status" value="1"/>
</dbReference>
<dbReference type="PANTHER" id="PTHR34108:SF1">
    <property type="entry name" value="SEPTUM SITE-DETERMINING PROTEIN MINC"/>
    <property type="match status" value="1"/>
</dbReference>
<dbReference type="Pfam" id="PF03775">
    <property type="entry name" value="MinC_C"/>
    <property type="match status" value="1"/>
</dbReference>
<dbReference type="Pfam" id="PF05209">
    <property type="entry name" value="MinC_N"/>
    <property type="match status" value="1"/>
</dbReference>
<dbReference type="SUPFAM" id="SSF63848">
    <property type="entry name" value="Cell-division inhibitor MinC, C-terminal domain"/>
    <property type="match status" value="1"/>
</dbReference>
<dbReference type="SUPFAM" id="SSF64043">
    <property type="entry name" value="Cell-division inhibitor MinC, N-terminal domain"/>
    <property type="match status" value="1"/>
</dbReference>
<name>MINC_THEP1</name>